<sequence>MSSSKRIAKELSDLGRDPPASCSAGPVGDDLYHWQASIMGPSDSPYAGGVFFLSIHFPTDYPFKPPKVNFTTKIYHPNINSSGNICLDILKDQWSPALTLSKVLLSICSLLTDANPDDPLVPEIAQIYKTDKAKYEATAKEWTKKYAV</sequence>
<keyword id="KW-0067">ATP-binding</keyword>
<keyword id="KW-0903">Direct protein sequencing</keyword>
<keyword id="KW-1017">Isopeptide bond</keyword>
<keyword id="KW-0547">Nucleotide-binding</keyword>
<keyword id="KW-0597">Phosphoprotein</keyword>
<keyword id="KW-1185">Reference proteome</keyword>
<keyword id="KW-0346">Stress response</keyword>
<keyword id="KW-0808">Transferase</keyword>
<keyword id="KW-0832">Ubl conjugation</keyword>
<keyword id="KW-0833">Ubl conjugation pathway</keyword>
<name>UBC5_YEAST</name>
<protein>
    <recommendedName>
        <fullName>Ubiquitin-conjugating enzyme E2-16 kDa</fullName>
        <ecNumber evidence="2 3">2.3.2.23</ecNumber>
    </recommendedName>
    <alternativeName>
        <fullName>E2 ubiquitin-conjugating enzyme 5</fullName>
    </alternativeName>
    <alternativeName>
        <fullName>Ubiquitin carrier protein</fullName>
    </alternativeName>
    <alternativeName>
        <fullName>Ubiquitin-protein ligase</fullName>
    </alternativeName>
</protein>
<reference key="1">
    <citation type="journal article" date="1990" name="EMBO J.">
        <title>Ubiquitin-conjugating enzymes UBC4 and UBC5 mediate selective degradation of short-lived and abnormal proteins.</title>
        <authorList>
            <person name="Seufert W."/>
            <person name="Jentsch S."/>
        </authorList>
    </citation>
    <scope>NUCLEOTIDE SEQUENCE [GENOMIC DNA]</scope>
    <scope>PROTEIN SEQUENCE OF 40-64 AND 119-125</scope>
    <scope>FUNCTION</scope>
    <scope>INDUCTION</scope>
</reference>
<reference key="2">
    <citation type="journal article" date="1996" name="Yeast">
        <title>Nucleotide sequence analysis of a 32,500 bp region of the right arm of Saccharomyces cerevisiae chromosome IV.</title>
        <authorList>
            <person name="Brandt P."/>
            <person name="Ramlow S."/>
            <person name="Otto B."/>
            <person name="Bloecker H."/>
        </authorList>
    </citation>
    <scope>NUCLEOTIDE SEQUENCE [GENOMIC DNA]</scope>
    <source>
        <strain>ATCC 204508 / S288c</strain>
    </source>
</reference>
<reference key="3">
    <citation type="journal article" date="1997" name="Nature">
        <title>The nucleotide sequence of Saccharomyces cerevisiae chromosome IV.</title>
        <authorList>
            <person name="Jacq C."/>
            <person name="Alt-Moerbe J."/>
            <person name="Andre B."/>
            <person name="Arnold W."/>
            <person name="Bahr A."/>
            <person name="Ballesta J.P.G."/>
            <person name="Bargues M."/>
            <person name="Baron L."/>
            <person name="Becker A."/>
            <person name="Biteau N."/>
            <person name="Bloecker H."/>
            <person name="Blugeon C."/>
            <person name="Boskovic J."/>
            <person name="Brandt P."/>
            <person name="Brueckner M."/>
            <person name="Buitrago M.J."/>
            <person name="Coster F."/>
            <person name="Delaveau T."/>
            <person name="del Rey F."/>
            <person name="Dujon B."/>
            <person name="Eide L.G."/>
            <person name="Garcia-Cantalejo J.M."/>
            <person name="Goffeau A."/>
            <person name="Gomez-Peris A."/>
            <person name="Granotier C."/>
            <person name="Hanemann V."/>
            <person name="Hankeln T."/>
            <person name="Hoheisel J.D."/>
            <person name="Jaeger W."/>
            <person name="Jimenez A."/>
            <person name="Jonniaux J.-L."/>
            <person name="Kraemer C."/>
            <person name="Kuester H."/>
            <person name="Laamanen P."/>
            <person name="Legros Y."/>
            <person name="Louis E.J."/>
            <person name="Moeller-Rieker S."/>
            <person name="Monnet A."/>
            <person name="Moro M."/>
            <person name="Mueller-Auer S."/>
            <person name="Nussbaumer B."/>
            <person name="Paricio N."/>
            <person name="Paulin L."/>
            <person name="Perea J."/>
            <person name="Perez-Alonso M."/>
            <person name="Perez-Ortin J.E."/>
            <person name="Pohl T.M."/>
            <person name="Prydz H."/>
            <person name="Purnelle B."/>
            <person name="Rasmussen S.W."/>
            <person name="Remacha M.A."/>
            <person name="Revuelta J.L."/>
            <person name="Rieger M."/>
            <person name="Salom D."/>
            <person name="Saluz H.P."/>
            <person name="Saiz J.E."/>
            <person name="Saren A.-M."/>
            <person name="Schaefer M."/>
            <person name="Scharfe M."/>
            <person name="Schmidt E.R."/>
            <person name="Schneider C."/>
            <person name="Scholler P."/>
            <person name="Schwarz S."/>
            <person name="Soler-Mira A."/>
            <person name="Urrestarazu L.A."/>
            <person name="Verhasselt P."/>
            <person name="Vissers S."/>
            <person name="Voet M."/>
            <person name="Volckaert G."/>
            <person name="Wagner G."/>
            <person name="Wambutt R."/>
            <person name="Wedler E."/>
            <person name="Wedler H."/>
            <person name="Woelfl S."/>
            <person name="Harris D.E."/>
            <person name="Bowman S."/>
            <person name="Brown D."/>
            <person name="Churcher C.M."/>
            <person name="Connor R."/>
            <person name="Dedman K."/>
            <person name="Gentles S."/>
            <person name="Hamlin N."/>
            <person name="Hunt S."/>
            <person name="Jones L."/>
            <person name="McDonald S."/>
            <person name="Murphy L.D."/>
            <person name="Niblett D."/>
            <person name="Odell C."/>
            <person name="Oliver K."/>
            <person name="Rajandream M.A."/>
            <person name="Richards C."/>
            <person name="Shore L."/>
            <person name="Walsh S.V."/>
            <person name="Barrell B.G."/>
            <person name="Dietrich F.S."/>
            <person name="Mulligan J.T."/>
            <person name="Allen E."/>
            <person name="Araujo R."/>
            <person name="Aviles E."/>
            <person name="Berno A."/>
            <person name="Carpenter J."/>
            <person name="Chen E."/>
            <person name="Cherry J.M."/>
            <person name="Chung E."/>
            <person name="Duncan M."/>
            <person name="Hunicke-Smith S."/>
            <person name="Hyman R.W."/>
            <person name="Komp C."/>
            <person name="Lashkari D."/>
            <person name="Lew H."/>
            <person name="Lin D."/>
            <person name="Mosedale D."/>
            <person name="Nakahara K."/>
            <person name="Namath A."/>
            <person name="Oefner P."/>
            <person name="Oh C."/>
            <person name="Petel F.X."/>
            <person name="Roberts D."/>
            <person name="Schramm S."/>
            <person name="Schroeder M."/>
            <person name="Shogren T."/>
            <person name="Shroff N."/>
            <person name="Winant A."/>
            <person name="Yelton M.A."/>
            <person name="Botstein D."/>
            <person name="Davis R.W."/>
            <person name="Johnston M."/>
            <person name="Andrews S."/>
            <person name="Brinkman R."/>
            <person name="Cooper J."/>
            <person name="Ding H."/>
            <person name="Du Z."/>
            <person name="Favello A."/>
            <person name="Fulton L."/>
            <person name="Gattung S."/>
            <person name="Greco T."/>
            <person name="Hallsworth K."/>
            <person name="Hawkins J."/>
            <person name="Hillier L.W."/>
            <person name="Jier M."/>
            <person name="Johnson D."/>
            <person name="Johnston L."/>
            <person name="Kirsten J."/>
            <person name="Kucaba T."/>
            <person name="Langston Y."/>
            <person name="Latreille P."/>
            <person name="Le T."/>
            <person name="Mardis E."/>
            <person name="Menezes S."/>
            <person name="Miller N."/>
            <person name="Nhan M."/>
            <person name="Pauley A."/>
            <person name="Peluso D."/>
            <person name="Rifkin L."/>
            <person name="Riles L."/>
            <person name="Taich A."/>
            <person name="Trevaskis E."/>
            <person name="Vignati D."/>
            <person name="Wilcox L."/>
            <person name="Wohldman P."/>
            <person name="Vaudin M."/>
            <person name="Wilson R."/>
            <person name="Waterston R."/>
            <person name="Albermann K."/>
            <person name="Hani J."/>
            <person name="Heumann K."/>
            <person name="Kleine K."/>
            <person name="Mewes H.-W."/>
            <person name="Zollner A."/>
            <person name="Zaccaria P."/>
        </authorList>
    </citation>
    <scope>NUCLEOTIDE SEQUENCE [LARGE SCALE GENOMIC DNA]</scope>
    <source>
        <strain>ATCC 204508 / S288c</strain>
    </source>
</reference>
<reference key="4">
    <citation type="journal article" date="2014" name="G3 (Bethesda)">
        <title>The reference genome sequence of Saccharomyces cerevisiae: Then and now.</title>
        <authorList>
            <person name="Engel S.R."/>
            <person name="Dietrich F.S."/>
            <person name="Fisk D.G."/>
            <person name="Binkley G."/>
            <person name="Balakrishnan R."/>
            <person name="Costanzo M.C."/>
            <person name="Dwight S.S."/>
            <person name="Hitz B.C."/>
            <person name="Karra K."/>
            <person name="Nash R.S."/>
            <person name="Weng S."/>
            <person name="Wong E.D."/>
            <person name="Lloyd P."/>
            <person name="Skrzypek M.S."/>
            <person name="Miyasato S.R."/>
            <person name="Simison M."/>
            <person name="Cherry J.M."/>
        </authorList>
    </citation>
    <scope>GENOME REANNOTATION</scope>
    <source>
        <strain>ATCC 204508 / S288c</strain>
    </source>
</reference>
<reference key="5">
    <citation type="journal article" date="2003" name="Nature">
        <title>Global analysis of protein expression in yeast.</title>
        <authorList>
            <person name="Ghaemmaghami S."/>
            <person name="Huh W.-K."/>
            <person name="Bower K."/>
            <person name="Howson R.W."/>
            <person name="Belle A."/>
            <person name="Dephoure N."/>
            <person name="O'Shea E.K."/>
            <person name="Weissman J.S."/>
        </authorList>
    </citation>
    <scope>LEVEL OF PROTEIN EXPRESSION [LARGE SCALE ANALYSIS]</scope>
</reference>
<reference key="6">
    <citation type="journal article" date="2009" name="Proc. Natl. Acad. Sci. U.S.A.">
        <title>Distinct ubiquitin ligases act sequentially for RNA polymerase II polyubiquitylation.</title>
        <authorList>
            <person name="Harreman M."/>
            <person name="Taschner M."/>
            <person name="Sigurdsson S."/>
            <person name="Anindya R."/>
            <person name="Reid J."/>
            <person name="Somesh B."/>
            <person name="Kong S.E."/>
            <person name="Banks C.A."/>
            <person name="Conaway R.C."/>
            <person name="Conaway J.W."/>
            <person name="Svejstrup J.Q."/>
        </authorList>
    </citation>
    <scope>FUNCTION</scope>
    <scope>IDENTIFICATION IN THE RSP5-UBA1-UBC5 UBIQUITIN LIGASE COMPLEX</scope>
</reference>
<organism>
    <name type="scientific">Saccharomyces cerevisiae (strain ATCC 204508 / S288c)</name>
    <name type="common">Baker's yeast</name>
    <dbReference type="NCBI Taxonomy" id="559292"/>
    <lineage>
        <taxon>Eukaryota</taxon>
        <taxon>Fungi</taxon>
        <taxon>Dikarya</taxon>
        <taxon>Ascomycota</taxon>
        <taxon>Saccharomycotina</taxon>
        <taxon>Saccharomycetes</taxon>
        <taxon>Saccharomycetales</taxon>
        <taxon>Saccharomycetaceae</taxon>
        <taxon>Saccharomyces</taxon>
    </lineage>
</organism>
<comment type="function">
    <text evidence="5 6">Catalyzes the covalent attachment of ubiquitin to other proteins (PubMed:19920177, PubMed:2154373). Mediates the selective degradation of short-lived and abnormal proteins (PubMed:2154373). The RSP5-UBA1-UBC5 ubiquitin ligase complex ubiquitinates RPO21 forming 'Lys-63'-linked polyubiquitin chains (PubMed:19920177).</text>
</comment>
<comment type="catalytic activity">
    <reaction evidence="2 3">
        <text>S-ubiquitinyl-[E1 ubiquitin-activating enzyme]-L-cysteine + [E2 ubiquitin-conjugating enzyme]-L-cysteine = [E1 ubiquitin-activating enzyme]-L-cysteine + S-ubiquitinyl-[E2 ubiquitin-conjugating enzyme]-L-cysteine.</text>
        <dbReference type="EC" id="2.3.2.23"/>
    </reaction>
</comment>
<comment type="pathway">
    <text evidence="2">Protein modification; protein ubiquitination.</text>
</comment>
<comment type="subunit">
    <text evidence="7">Component of the RSP5-UBA1-UBC5 ubiquitin ligase complex composed of E3 RSP5, E1 UBA1 and E2 UBC5.</text>
</comment>
<comment type="induction">
    <text evidence="6">By heat shock and cadmium.</text>
</comment>
<comment type="PTM">
    <text>The N-terminus is blocked.</text>
</comment>
<comment type="miscellaneous">
    <text evidence="4">Present with 981 molecules/cell in log phase SD medium.</text>
</comment>
<comment type="similarity">
    <text evidence="2">Belongs to the ubiquitin-conjugating enzyme family.</text>
</comment>
<dbReference type="EC" id="2.3.2.23" evidence="2 3"/>
<dbReference type="EMBL" id="X17494">
    <property type="protein sequence ID" value="CAA35529.1"/>
    <property type="molecule type" value="Genomic_DNA"/>
</dbReference>
<dbReference type="EMBL" id="Z49209">
    <property type="protein sequence ID" value="CAA89088.1"/>
    <property type="molecule type" value="Genomic_DNA"/>
</dbReference>
<dbReference type="EMBL" id="X84162">
    <property type="protein sequence ID" value="CAA58975.1"/>
    <property type="molecule type" value="Genomic_DNA"/>
</dbReference>
<dbReference type="EMBL" id="Z74355">
    <property type="protein sequence ID" value="CAA98877.1"/>
    <property type="molecule type" value="Genomic_DNA"/>
</dbReference>
<dbReference type="EMBL" id="BK006938">
    <property type="protein sequence ID" value="DAA11905.1"/>
    <property type="molecule type" value="Genomic_DNA"/>
</dbReference>
<dbReference type="PIR" id="S22858">
    <property type="entry name" value="S22858"/>
</dbReference>
<dbReference type="RefSeq" id="NP_010344.1">
    <property type="nucleotide sequence ID" value="NM_001180367.1"/>
</dbReference>
<dbReference type="SMR" id="P15732"/>
<dbReference type="BioGRID" id="32114">
    <property type="interactions" value="77"/>
</dbReference>
<dbReference type="FunCoup" id="P15732">
    <property type="interactions" value="1027"/>
</dbReference>
<dbReference type="IntAct" id="P15732">
    <property type="interactions" value="5"/>
</dbReference>
<dbReference type="MINT" id="P15732"/>
<dbReference type="STRING" id="4932.YDR059C"/>
<dbReference type="GlyGen" id="P15732">
    <property type="glycosylation" value="3 sites, 1 O-linked glycan (3 sites)"/>
</dbReference>
<dbReference type="iPTMnet" id="P15732"/>
<dbReference type="PaxDb" id="4932-YDR059C"/>
<dbReference type="PeptideAtlas" id="P15732"/>
<dbReference type="EnsemblFungi" id="YDR059C_mRNA">
    <property type="protein sequence ID" value="YDR059C"/>
    <property type="gene ID" value="YDR059C"/>
</dbReference>
<dbReference type="GeneID" id="851631"/>
<dbReference type="KEGG" id="sce:YDR059C"/>
<dbReference type="AGR" id="SGD:S000002466"/>
<dbReference type="SGD" id="S000002466">
    <property type="gene designation" value="UBC5"/>
</dbReference>
<dbReference type="VEuPathDB" id="FungiDB:YDR059C"/>
<dbReference type="eggNOG" id="KOG0417">
    <property type="taxonomic scope" value="Eukaryota"/>
</dbReference>
<dbReference type="GeneTree" id="ENSGT00940000155109"/>
<dbReference type="HOGENOM" id="CLU_030988_13_3_1"/>
<dbReference type="InParanoid" id="P15732"/>
<dbReference type="OMA" id="PNIASMY"/>
<dbReference type="OrthoDB" id="7851174at2759"/>
<dbReference type="BioCyc" id="YEAST:G3O-29667-MONOMER"/>
<dbReference type="Reactome" id="R-SCE-8866652">
    <property type="pathway name" value="Synthesis of active ubiquitin: roles of E1 and E2 enzymes"/>
</dbReference>
<dbReference type="Reactome" id="R-SCE-8866654">
    <property type="pathway name" value="E3 ubiquitin ligases ubiquitinate target proteins"/>
</dbReference>
<dbReference type="Reactome" id="R-SCE-9033241">
    <property type="pathway name" value="Peroxisomal protein import"/>
</dbReference>
<dbReference type="Reactome" id="R-SCE-983168">
    <property type="pathway name" value="Antigen processing: Ubiquitination &amp; Proteasome degradation"/>
</dbReference>
<dbReference type="UniPathway" id="UPA00143"/>
<dbReference type="BioGRID-ORCS" id="851631">
    <property type="hits" value="0 hits in 10 CRISPR screens"/>
</dbReference>
<dbReference type="PRO" id="PR:P15732"/>
<dbReference type="Proteomes" id="UP000002311">
    <property type="component" value="Chromosome IV"/>
</dbReference>
<dbReference type="RNAct" id="P15732">
    <property type="molecule type" value="protein"/>
</dbReference>
<dbReference type="GO" id="GO:0005634">
    <property type="term" value="C:nucleus"/>
    <property type="evidence" value="ECO:0000318"/>
    <property type="project" value="GO_Central"/>
</dbReference>
<dbReference type="GO" id="GO:0005524">
    <property type="term" value="F:ATP binding"/>
    <property type="evidence" value="ECO:0007669"/>
    <property type="project" value="UniProtKB-KW"/>
</dbReference>
<dbReference type="GO" id="GO:0070628">
    <property type="term" value="F:proteasome binding"/>
    <property type="evidence" value="ECO:0000314"/>
    <property type="project" value="SGD"/>
</dbReference>
<dbReference type="GO" id="GO:0061631">
    <property type="term" value="F:ubiquitin conjugating enzyme activity"/>
    <property type="evidence" value="ECO:0000318"/>
    <property type="project" value="GO_Central"/>
</dbReference>
<dbReference type="GO" id="GO:0004842">
    <property type="term" value="F:ubiquitin-protein transferase activity"/>
    <property type="evidence" value="ECO:0000314"/>
    <property type="project" value="SGD"/>
</dbReference>
<dbReference type="GO" id="GO:0000209">
    <property type="term" value="P:protein polyubiquitination"/>
    <property type="evidence" value="ECO:0000314"/>
    <property type="project" value="SGD"/>
</dbReference>
<dbReference type="GO" id="GO:0006511">
    <property type="term" value="P:ubiquitin-dependent protein catabolic process"/>
    <property type="evidence" value="ECO:0000318"/>
    <property type="project" value="GO_Central"/>
</dbReference>
<dbReference type="CDD" id="cd23792">
    <property type="entry name" value="UBCc_UBE2D"/>
    <property type="match status" value="1"/>
</dbReference>
<dbReference type="FunFam" id="3.10.110.10:FF:000010">
    <property type="entry name" value="Ubiquitin-conjugating enzyme E2-16 kDa"/>
    <property type="match status" value="1"/>
</dbReference>
<dbReference type="Gene3D" id="3.10.110.10">
    <property type="entry name" value="Ubiquitin Conjugating Enzyme"/>
    <property type="match status" value="1"/>
</dbReference>
<dbReference type="InterPro" id="IPR000608">
    <property type="entry name" value="UBQ-conjugat_E2_core"/>
</dbReference>
<dbReference type="InterPro" id="IPR023313">
    <property type="entry name" value="UBQ-conjugating_AS"/>
</dbReference>
<dbReference type="InterPro" id="IPR016135">
    <property type="entry name" value="UBQ-conjugating_enzyme/RWD"/>
</dbReference>
<dbReference type="PANTHER" id="PTHR24068">
    <property type="entry name" value="UBIQUITIN-CONJUGATING ENZYME E2"/>
    <property type="match status" value="1"/>
</dbReference>
<dbReference type="Pfam" id="PF00179">
    <property type="entry name" value="UQ_con"/>
    <property type="match status" value="1"/>
</dbReference>
<dbReference type="SMART" id="SM00212">
    <property type="entry name" value="UBCc"/>
    <property type="match status" value="1"/>
</dbReference>
<dbReference type="SUPFAM" id="SSF54495">
    <property type="entry name" value="UBC-like"/>
    <property type="match status" value="1"/>
</dbReference>
<dbReference type="PROSITE" id="PS00183">
    <property type="entry name" value="UBC_1"/>
    <property type="match status" value="1"/>
</dbReference>
<dbReference type="PROSITE" id="PS50127">
    <property type="entry name" value="UBC_2"/>
    <property type="match status" value="1"/>
</dbReference>
<gene>
    <name type="primary">UBC5</name>
    <name type="ordered locus">YDR059C</name>
    <name type="ORF">D4234</name>
    <name type="ORF">YD9609.13C</name>
</gene>
<feature type="chain" id="PRO_0000082546" description="Ubiquitin-conjugating enzyme E2-16 kDa">
    <location>
        <begin position="1"/>
        <end position="148"/>
    </location>
</feature>
<feature type="domain" description="UBC core" evidence="2">
    <location>
        <begin position="2"/>
        <end position="148"/>
    </location>
</feature>
<feature type="active site" description="Glycyl thioester intermediate" evidence="2 3">
    <location>
        <position position="86"/>
    </location>
</feature>
<feature type="modified residue" description="Phosphoserine" evidence="1">
    <location>
        <position position="12"/>
    </location>
</feature>
<feature type="cross-link" description="Glycyl lysine isopeptide (Lys-Gly) (interchain with G-Cter in ubiquitin)" evidence="1">
    <location>
        <position position="91"/>
    </location>
</feature>
<accession>P15732</accession>
<accession>D6VS45</accession>
<evidence type="ECO:0000250" key="1">
    <source>
        <dbReference type="UniProtKB" id="P15731"/>
    </source>
</evidence>
<evidence type="ECO:0000255" key="2">
    <source>
        <dbReference type="PROSITE-ProRule" id="PRU00388"/>
    </source>
</evidence>
<evidence type="ECO:0000255" key="3">
    <source>
        <dbReference type="PROSITE-ProRule" id="PRU10133"/>
    </source>
</evidence>
<evidence type="ECO:0000269" key="4">
    <source>
    </source>
</evidence>
<evidence type="ECO:0000269" key="5">
    <source>
    </source>
</evidence>
<evidence type="ECO:0000269" key="6">
    <source>
    </source>
</evidence>
<evidence type="ECO:0000305" key="7">
    <source>
    </source>
</evidence>
<proteinExistence type="evidence at protein level"/>